<proteinExistence type="evidence at protein level"/>
<comment type="function">
    <molecule>Isoform 1</molecule>
    <text evidence="7 8 9 10 11 16">Functions as a transcriptional regulator binding to DNA sequences in the promoter region of target genes and regulating positively or negatively their expression. Oncogene which plays a role in development, cell proliferation and differentiation. May also play a role in apoptosis through regulation of the JNK and TGF-beta signaling. Involved in hematopoiesis.</text>
</comment>
<comment type="function">
    <molecule>Isoform 7</molecule>
    <text evidence="2">Displays histone methyltransferase activity and monomethylates 'Lys-9' of histone H3 (H3K9me1) in vitro. Probably catalyzes the monomethylation of free histone H3 in the cytoplasm which is then transported to the nucleus and incorporated into nucleosomes where SUV39H methyltransferases use it as a substrate to catalyze histone H3 'Lys-9' trimethylation. Likely to be one of the primary histone methyltransferases along with PRDM16 that direct cytoplasmic H3K9me1 methylation.</text>
</comment>
<comment type="catalytic activity">
    <reaction evidence="2">
        <text>L-lysyl(9)-[histone H3] + S-adenosyl-L-methionine = N(6)-methyl-L-lysyl(9)-[histone H3] + S-adenosyl-L-homocysteine + H(+)</text>
        <dbReference type="Rhea" id="RHEA:60280"/>
        <dbReference type="Rhea" id="RHEA-COMP:15542"/>
        <dbReference type="Rhea" id="RHEA-COMP:15546"/>
        <dbReference type="ChEBI" id="CHEBI:15378"/>
        <dbReference type="ChEBI" id="CHEBI:29969"/>
        <dbReference type="ChEBI" id="CHEBI:57856"/>
        <dbReference type="ChEBI" id="CHEBI:59789"/>
        <dbReference type="ChEBI" id="CHEBI:61929"/>
        <dbReference type="EC" id="2.1.1.367"/>
    </reaction>
</comment>
<comment type="subunit">
    <molecule>Isoform 1</molecule>
    <text evidence="2 7 8 9 16">Homooligomer. Interacts with SUV39H1 (via SET domain); enhances MECOM transcriptional repression activity (By similarity). Interacts with CTBP1. Interacts with SMAD3 (via MH2 domain); the interaction is direct. Interacts with SMAD4; through interaction with SMAD3. Interacts with CREBBP, KAT2B and histone deacetylases. Interacts with MAPK8 and MAPK9; inhibits JNK signaling (PubMed:10856240, PubMed:11568182, PubMed:15897867, PubMed:9665135).</text>
</comment>
<comment type="interaction">
    <interactant intactId="EBI-1384862">
        <id>Q03112</id>
    </interactant>
    <interactant intactId="EBI-852851">
        <id>P01100</id>
        <label>FOS</label>
    </interactant>
    <organismsDiffer>false</organismsDiffer>
    <experiments>4</experiments>
</comment>
<comment type="interaction">
    <interactant intactId="EBI-1384862">
        <id>Q03112</id>
    </interactant>
    <interactant intactId="EBI-10692254">
        <id>Q5R372-2</id>
        <label>RABGAP1L</label>
    </interactant>
    <organismsDiffer>false</organismsDiffer>
    <experiments>3</experiments>
</comment>
<comment type="interaction">
    <interactant intactId="EBI-1384862">
        <id>Q03112</id>
    </interactant>
    <interactant intactId="EBI-620823">
        <id>Q09028</id>
        <label>RBBP4</label>
    </interactant>
    <organismsDiffer>false</organismsDiffer>
    <experiments>4</experiments>
</comment>
<comment type="interaction">
    <interactant intactId="EBI-1384862">
        <id>Q03112</id>
    </interactant>
    <interactant intactId="EBI-1802965">
        <id>Q96EB6</id>
        <label>SIRT1</label>
    </interactant>
    <organismsDiffer>false</organismsDiffer>
    <experiments>2</experiments>
</comment>
<comment type="interaction">
    <interactant intactId="EBI-1384862">
        <id>Q03112</id>
    </interactant>
    <interactant intactId="EBI-357355">
        <id>Q9UBK9</id>
        <label>UXT</label>
    </interactant>
    <organismsDiffer>false</organismsDiffer>
    <experiments>5</experiments>
</comment>
<comment type="interaction">
    <interactant intactId="EBI-1384862">
        <id>Q03112</id>
    </interactant>
    <interactant intactId="EBI-1384883">
        <id>P56546</id>
        <label>Ctbp2</label>
    </interactant>
    <organismsDiffer>true</organismsDiffer>
    <experiments>3</experiments>
</comment>
<comment type="interaction">
    <interactant intactId="EBI-23820194">
        <id>Q03112-9</id>
    </interactant>
    <interactant intactId="EBI-21535880">
        <id>Q92870-2</id>
        <label>APBB2</label>
    </interactant>
    <organismsDiffer>false</organismsDiffer>
    <experiments>3</experiments>
</comment>
<comment type="interaction">
    <interactant intactId="EBI-23820194">
        <id>Q03112-9</id>
    </interactant>
    <interactant intactId="EBI-10192241">
        <id>O95833</id>
        <label>CLIC3</label>
    </interactant>
    <organismsDiffer>false</organismsDiffer>
    <experiments>3</experiments>
</comment>
<comment type="interaction">
    <interactant intactId="EBI-23820194">
        <id>Q03112-9</id>
    </interactant>
    <interactant intactId="EBI-352682">
        <id>P04792</id>
        <label>HSPB1</label>
    </interactant>
    <organismsDiffer>false</organismsDiffer>
    <experiments>3</experiments>
</comment>
<comment type="interaction">
    <interactant intactId="EBI-23820194">
        <id>Q03112-9</id>
    </interactant>
    <interactant intactId="EBI-10975473">
        <id>O60333-2</id>
        <label>KIF1B</label>
    </interactant>
    <organismsDiffer>false</organismsDiffer>
    <experiments>3</experiments>
</comment>
<comment type="interaction">
    <interactant intactId="EBI-23820194">
        <id>Q03112-9</id>
    </interactant>
    <interactant intactId="EBI-396669">
        <id>Q9Y3C5</id>
        <label>RNF11</label>
    </interactant>
    <organismsDiffer>false</organismsDiffer>
    <experiments>3</experiments>
</comment>
<comment type="interaction">
    <interactant intactId="EBI-23820194">
        <id>Q03112-9</id>
    </interactant>
    <interactant intactId="EBI-720609">
        <id>O76024</id>
        <label>WFS1</label>
    </interactant>
    <organismsDiffer>false</organismsDiffer>
    <experiments>3</experiments>
</comment>
<comment type="subcellular location">
    <subcellularLocation>
        <location evidence="8 9 16">Nucleus</location>
    </subcellularLocation>
    <subcellularLocation>
        <location evidence="8">Nucleus speckle</location>
    </subcellularLocation>
    <subcellularLocation>
        <location evidence="12">Cytoplasm</location>
    </subcellularLocation>
</comment>
<comment type="alternative products">
    <event type="alternative promoter"/>
    <event type="alternative splicing"/>
    <isoform>
        <id>Q03112-7</id>
        <name>7</name>
        <sequence type="displayed"/>
    </isoform>
    <isoform>
        <id>Q03112-1</id>
        <name>1</name>
        <name>Long</name>
        <name>Evi-1a</name>
        <sequence type="described" ref="VSP_059479 VSP_059484"/>
    </isoform>
    <isoform>
        <id>Q03112-3</id>
        <name>2</name>
        <name>Evi-1c</name>
        <name>Mds1/Evi1</name>
        <sequence type="described" ref="VSP_059484"/>
    </isoform>
    <isoform>
        <id>Q03112-4</id>
        <name>4</name>
        <sequence type="described" ref="VSP_059480 VSP_059483 VSP_059484"/>
    </isoform>
    <isoform>
        <id>Q03112-5</id>
        <name>5</name>
        <sequence type="described" ref="VSP_059479"/>
    </isoform>
    <isoform>
        <id>Q03112-6</id>
        <name>6</name>
        <sequence type="described" ref="VSP_059479 VSP_059483"/>
    </isoform>
    <isoform>
        <id>Q03112-8</id>
        <name>8</name>
        <sequence type="described" ref="VSP_059484 VSP_059485 VSP_059486"/>
    </isoform>
    <isoform>
        <id>Q03112-9</id>
        <name>9</name>
        <name>MDS1</name>
        <sequence type="described" ref="VSP_059481 VSP_059482"/>
    </isoform>
</comment>
<comment type="domain">
    <text>Both zinc finger regions are required for the transcriptional activation of PBX1.</text>
</comment>
<comment type="PTM">
    <text evidence="1">Phosphorylated.</text>
</comment>
<comment type="PTM">
    <text evidence="8">May be acetylated by CREBBP and KAT2B.</text>
</comment>
<comment type="disease">
    <text evidence="14">A chromosomal aberration involving EVI1 is a cause of chronic myelogenous leukemia (CML). Translocation t(3;21)(q26;q22) with RUNX1/AML1.</text>
</comment>
<comment type="disease" evidence="13">
    <disease id="DI-04632">
        <name>Radioulnar synostosis with amegakaryocytic thrombocytopenia 2</name>
        <acronym>RUSAT2</acronym>
        <description>An autosomal dominant disease characterized by proximal fusion of the radius and ulna resulting in extremely limited pronation and supination of the forearm, and congenital thrombocytopenia that progresses to pancytopenia.</description>
        <dbReference type="MIM" id="616738"/>
    </disease>
    <text>The disease is caused by variants affecting the gene represented in this entry.</text>
</comment>
<comment type="disease">
    <text evidence="15">A chromosomal aberration involving MDS1 is found in a form of acute myeloid leukemia (AML). Translocation t(3;21) with AML1.</text>
</comment>
<comment type="miscellaneous">
    <molecule>Isoform 2</molecule>
    <text evidence="9 25">Produced by alternative promoter usage. Unable to form homooligomers, to interact with CTBP1 and SMAD3 and to repress TGF-beta signaling.</text>
</comment>
<comment type="miscellaneous">
    <molecule>Isoform 9</molecule>
    <text evidence="19">Produced by alternative promoter usage.</text>
</comment>
<comment type="sequence caution" evidence="19">
    <conflict type="erroneous initiation">
        <sequence resource="EMBL-CDS" id="AAB29907"/>
    </conflict>
    <text>Extended N-terminus.</text>
</comment>
<comment type="sequence caution" evidence="19">
    <conflict type="miscellaneous discrepancy">
        <sequence resource="EMBL-CDS" id="AAB29907"/>
    </conflict>
    <text>Chimeric cDNA that is the result of a chromosomal aberration involving EVI1 and RUNX1.</text>
</comment>
<comment type="sequence caution" evidence="19">
    <conflict type="erroneous initiation">
        <sequence resource="EMBL-CDS" id="AAI30521"/>
    </conflict>
    <text>Truncated N-terminus.</text>
</comment>
<comment type="online information" name="Atlas of Genetics and Cytogenetics in Oncology and Haematology">
    <link uri="https://atlasgeneticsoncology.org/gene/19/EVI103q26"/>
</comment>
<feature type="chain" id="PRO_0000047273" description="Histone-lysine N-methyltransferase MECOM">
    <location>
        <begin position="1"/>
        <end position="1230"/>
    </location>
</feature>
<feature type="domain" description="SET" evidence="5">
    <location>
        <begin position="78"/>
        <end position="190"/>
    </location>
</feature>
<feature type="zinc finger region" description="C2H2-type 1" evidence="4">
    <location>
        <begin position="209"/>
        <end position="236"/>
    </location>
</feature>
<feature type="zinc finger region" description="C2H2-type 2" evidence="4">
    <location>
        <begin position="263"/>
        <end position="285"/>
    </location>
</feature>
<feature type="zinc finger region" description="C2H2-type 3" evidence="4">
    <location>
        <begin position="291"/>
        <end position="313"/>
    </location>
</feature>
<feature type="zinc finger region" description="C2H2-type 4" evidence="4">
    <location>
        <begin position="319"/>
        <end position="342"/>
    </location>
</feature>
<feature type="zinc finger region" description="C2H2-type 5" evidence="4">
    <location>
        <begin position="348"/>
        <end position="370"/>
    </location>
</feature>
<feature type="zinc finger region" description="C2H2-type 6" evidence="4">
    <location>
        <begin position="376"/>
        <end position="398"/>
    </location>
</feature>
<feature type="zinc finger region" description="C2H2-type 7; atypical" evidence="4">
    <location>
        <begin position="405"/>
        <end position="427"/>
    </location>
</feature>
<feature type="zinc finger region" description="C2H2-type 8" evidence="4">
    <location>
        <begin position="912"/>
        <end position="934"/>
    </location>
</feature>
<feature type="zinc finger region" description="C2H2-type 9" evidence="4">
    <location>
        <begin position="940"/>
        <end position="963"/>
    </location>
</feature>
<feature type="zinc finger region" description="C2H2-type 10" evidence="4">
    <location>
        <begin position="969"/>
        <end position="991"/>
    </location>
</feature>
<feature type="region of interest" description="Interaction with MAPK9, SMAD3 and probably SUV39H1" evidence="7">
    <location>
        <begin position="189"/>
        <end position="440"/>
    </location>
</feature>
<feature type="region of interest" description="Disordered" evidence="6">
    <location>
        <begin position="510"/>
        <end position="530"/>
    </location>
</feature>
<feature type="region of interest" description="Disordered" evidence="6">
    <location>
        <begin position="547"/>
        <end position="618"/>
    </location>
</feature>
<feature type="region of interest" description="Disordered" evidence="6">
    <location>
        <begin position="718"/>
        <end position="821"/>
    </location>
</feature>
<feature type="region of interest" description="Disordered" evidence="6">
    <location>
        <begin position="990"/>
        <end position="1009"/>
    </location>
</feature>
<feature type="region of interest" description="Disordered" evidence="6">
    <location>
        <begin position="1030"/>
        <end position="1113"/>
    </location>
</feature>
<feature type="short sequence motif" description="Nuclear localization signal" evidence="3">
    <location>
        <begin position="609"/>
        <end position="622"/>
    </location>
</feature>
<feature type="short sequence motif" description="CTBP-binding motif 1" evidence="1">
    <location>
        <begin position="741"/>
        <end position="745"/>
    </location>
</feature>
<feature type="short sequence motif" description="CTBP-binding motif 2" evidence="1">
    <location>
        <begin position="772"/>
        <end position="776"/>
    </location>
</feature>
<feature type="compositionally biased region" description="Polar residues" evidence="6">
    <location>
        <begin position="515"/>
        <end position="528"/>
    </location>
</feature>
<feature type="compositionally biased region" description="Basic and acidic residues" evidence="6">
    <location>
        <begin position="560"/>
        <end position="575"/>
    </location>
</feature>
<feature type="compositionally biased region" description="Polar residues" evidence="6">
    <location>
        <begin position="586"/>
        <end position="600"/>
    </location>
</feature>
<feature type="compositionally biased region" description="Basic and acidic residues" evidence="6">
    <location>
        <begin position="606"/>
        <end position="618"/>
    </location>
</feature>
<feature type="compositionally biased region" description="Pro residues" evidence="6">
    <location>
        <begin position="755"/>
        <end position="764"/>
    </location>
</feature>
<feature type="compositionally biased region" description="Polar residues" evidence="6">
    <location>
        <begin position="778"/>
        <end position="787"/>
    </location>
</feature>
<feature type="compositionally biased region" description="Polar residues" evidence="6">
    <location>
        <begin position="994"/>
        <end position="1005"/>
    </location>
</feature>
<feature type="compositionally biased region" description="Polar residues" evidence="6">
    <location>
        <begin position="1030"/>
        <end position="1041"/>
    </location>
</feature>
<feature type="compositionally biased region" description="Basic and acidic residues" evidence="6">
    <location>
        <begin position="1042"/>
        <end position="1057"/>
    </location>
</feature>
<feature type="compositionally biased region" description="Acidic residues" evidence="6">
    <location>
        <begin position="1066"/>
        <end position="1086"/>
    </location>
</feature>
<feature type="modified residue" description="Phosphoserine" evidence="22">
    <location>
        <position position="624"/>
    </location>
</feature>
<feature type="modified residue" description="Phosphoserine" evidence="22">
    <location>
        <position position="726"/>
    </location>
</feature>
<feature type="modified residue" description="Phosphoserine" evidence="2">
    <location>
        <position position="740"/>
    </location>
</feature>
<feature type="modified residue" description="Phosphoserine" evidence="22">
    <location>
        <position position="1037"/>
    </location>
</feature>
<feature type="modified residue" description="Phosphoserine" evidence="21 22">
    <location>
        <position position="1039"/>
    </location>
</feature>
<feature type="cross-link" description="Glycyl lysine isopeptide (Lys-Gly) (interchain with G-Cter in SUMO2)" evidence="25">
    <location>
        <position position="99"/>
    </location>
</feature>
<feature type="cross-link" description="Glycyl lysine isopeptide (Lys-Gly) (interchain with G-Cter in SUMO2)" evidence="23 24 25">
    <location>
        <position position="190"/>
    </location>
</feature>
<feature type="cross-link" description="Glycyl lysine isopeptide (Lys-Gly) (interchain with G-Cter in SUMO2)" evidence="25">
    <location>
        <position position="249"/>
    </location>
</feature>
<feature type="cross-link" description="Glycyl lysine isopeptide (Lys-Gly) (interchain with G-Cter in SUMO2)" evidence="25">
    <location>
        <position position="292"/>
    </location>
</feature>
<feature type="cross-link" description="Glycyl lysine isopeptide (Lys-Gly) (interchain with G-Cter in SUMO2)" evidence="25">
    <location>
        <position position="367"/>
    </location>
</feature>
<feature type="cross-link" description="Glycyl lysine isopeptide (Lys-Gly) (interchain with G-Cter in SUMO2)" evidence="25">
    <location>
        <position position="374"/>
    </location>
</feature>
<feature type="cross-link" description="Glycyl lysine isopeptide (Lys-Gly) (interchain with G-Cter in SUMO2)" evidence="25">
    <location>
        <position position="430"/>
    </location>
</feature>
<feature type="cross-link" description="Glycyl lysine isopeptide (Lys-Gly) (interchain with G-Cter in SUMO2)" evidence="25">
    <location>
        <position position="523"/>
    </location>
</feature>
<feature type="cross-link" description="Glycyl lysine isopeptide (Lys-Gly) (interchain with G-Cter in SUMO2)" evidence="25">
    <location>
        <position position="543"/>
    </location>
</feature>
<feature type="cross-link" description="Glycyl lysine isopeptide (Lys-Gly) (interchain with G-Cter in SUMO2)" evidence="25">
    <location>
        <position position="547"/>
    </location>
</feature>
<feature type="cross-link" description="Glycyl lysine isopeptide (Lys-Gly) (interchain with G-Cter in SUMO2)" evidence="23 24 25">
    <location>
        <position position="555"/>
    </location>
</feature>
<feature type="cross-link" description="Glycyl lysine isopeptide (Lys-Gly) (interchain with G-Cter in SUMO2)" evidence="25">
    <location>
        <position position="622"/>
    </location>
</feature>
<feature type="cross-link" description="Glycyl lysine isopeptide (Lys-Gly) (interchain with G-Cter in SUMO2)" evidence="25">
    <location>
        <position position="635"/>
    </location>
</feature>
<feature type="cross-link" description="Glycyl lysine isopeptide (Lys-Gly) (interchain with G-Cter in SUMO2)" evidence="25">
    <location>
        <position position="663"/>
    </location>
</feature>
<feature type="cross-link" description="Glycyl lysine isopeptide (Lys-Gly) (interchain with G-Cter in SUMO2)" evidence="23 24 25">
    <location>
        <position position="685"/>
    </location>
</feature>
<feature type="cross-link" description="Glycyl lysine isopeptide (Lys-Gly) (interchain with G-Cter in SUMO2)" evidence="23 24 25">
    <location>
        <position position="721"/>
    </location>
</feature>
<feature type="cross-link" description="Glycyl lysine isopeptide (Lys-Gly) (interchain with G-Cter in SUMO2)" evidence="25">
    <location>
        <position position="731"/>
    </location>
</feature>
<feature type="cross-link" description="Glycyl lysine isopeptide (Lys-Gly) (interchain with G-Cter in SUMO2)" evidence="25">
    <location>
        <position position="732"/>
    </location>
</feature>
<feature type="cross-link" description="Glycyl lysine isopeptide (Lys-Gly) (interchain with G-Cter in SUMO2)" evidence="23 25">
    <location>
        <position position="735"/>
    </location>
</feature>
<feature type="cross-link" description="Glycyl lysine isopeptide (Lys-Gly) (interchain with G-Cter in SUMO2)" evidence="25">
    <location>
        <position position="749"/>
    </location>
</feature>
<feature type="cross-link" description="Glycyl lysine isopeptide (Lys-Gly) (interchain with G-Cter in SUMO2)" evidence="23 25">
    <location>
        <position position="752"/>
    </location>
</feature>
<feature type="cross-link" description="Glycyl lysine isopeptide (Lys-Gly) (interchain with G-Cter in SUMO2)" evidence="25">
    <location>
        <position position="760"/>
    </location>
</feature>
<feature type="cross-link" description="Glycyl lysine isopeptide (Lys-Gly) (interchain with G-Cter in SUMO2)" evidence="23 25">
    <location>
        <position position="787"/>
    </location>
</feature>
<feature type="cross-link" description="Glycyl lysine isopeptide (Lys-Gly) (interchain with G-Cter in SUMO2)" evidence="25">
    <location>
        <position position="800"/>
    </location>
</feature>
<feature type="cross-link" description="Glycyl lysine isopeptide (Lys-Gly) (interchain with G-Cter in SUMO2)" evidence="25">
    <location>
        <position position="801"/>
    </location>
</feature>
<feature type="cross-link" description="Glycyl lysine isopeptide (Lys-Gly) (interchain with G-Cter in SUMO2)" evidence="25">
    <location>
        <position position="835"/>
    </location>
</feature>
<feature type="cross-link" description="Glycyl lysine isopeptide (Lys-Gly) (interchain with G-Cter in SUMO2)" evidence="25">
    <location>
        <position position="844"/>
    </location>
</feature>
<feature type="cross-link" description="Glycyl lysine isopeptide (Lys-Gly) (interchain with G-Cter in SUMO2)" evidence="25">
    <location>
        <position position="846"/>
    </location>
</feature>
<feature type="cross-link" description="Glycyl lysine isopeptide (Lys-Gly) (interchain with G-Cter in SUMO2)" evidence="24 25">
    <location>
        <position position="877"/>
    </location>
</feature>
<feature type="cross-link" description="Glycyl lysine isopeptide (Lys-Gly) (interchain with G-Cter in SUMO2)" evidence="25">
    <location>
        <position position="1018"/>
    </location>
</feature>
<feature type="cross-link" description="Glycyl lysine isopeptide (Lys-Gly) (interchain with G-Cter in SUMO2)" evidence="24 25">
    <location>
        <position position="1053"/>
    </location>
</feature>
<feature type="cross-link" description="Glycyl lysine isopeptide (Lys-Gly) (interchain with G-Cter in SUMO2)" evidence="25">
    <location>
        <position position="1056"/>
    </location>
</feature>
<feature type="cross-link" description="Glycyl lysine isopeptide (Lys-Gly) (interchain with G-Cter in SUMO2)" evidence="25">
    <location>
        <position position="1120"/>
    </location>
</feature>
<feature type="cross-link" description="Glycyl lysine isopeptide (Lys-Gly) (interchain with G-Cter in SUMO2)" evidence="23 25">
    <location>
        <position position="1127"/>
    </location>
</feature>
<feature type="cross-link" description="Glycyl lysine isopeptide (Lys-Gly) (interchain with G-Cter in SUMO2)" evidence="23 24 25">
    <location>
        <position position="1132"/>
    </location>
</feature>
<feature type="cross-link" description="Glycyl lysine isopeptide (Lys-Gly) (interchain with G-Cter in SUMO2)" evidence="25">
    <location>
        <position position="1149"/>
    </location>
</feature>
<feature type="cross-link" description="Glycyl lysine isopeptide (Lys-Gly) (interchain with G-Cter in SUMO2)" evidence="23 24 25">
    <location>
        <position position="1152"/>
    </location>
</feature>
<feature type="cross-link" description="Glycyl lysine isopeptide (Lys-Gly) (interchain with G-Cter in SUMO2)" evidence="25">
    <location>
        <position position="1176"/>
    </location>
</feature>
<feature type="cross-link" description="Glycyl lysine isopeptide (Lys-Gly) (interchain with G-Cter in SUMO2)" evidence="25">
    <location>
        <position position="1184"/>
    </location>
</feature>
<feature type="splice variant" id="VSP_059479" description="In isoform 1, isoform 5 and isoform 6.">
    <location>
        <begin position="1"/>
        <end position="188"/>
    </location>
</feature>
<feature type="splice variant" id="VSP_059480" description="In isoform 4.">
    <original>MRSKGRARKLATNNECVYGNYPEIPLEEMPDADGVASTPSLNIQEPCSPATSSEAFTPKEGSPYKAPIYIPDDIPIPAEFELRESNMPGAGLGIWTKRKIEVGEKFGPYVGEQRSNLKDPSYGWE</original>
    <variation>M</variation>
    <location>
        <begin position="1"/>
        <end position="125"/>
    </location>
</feature>
<feature type="splice variant" id="VSP_059481" description="In isoform 9.">
    <original>ILDEFYNVKFCIDASQPDVGSWLKYIRFAGCYDQHNLVACQIND</original>
    <variation>VHLPRSRRVSVHSWLYLGKRSSDVGIAFSQADVYMPGLQCAFLS</variation>
    <location>
        <begin position="126"/>
        <end position="169"/>
    </location>
</feature>
<feature type="splice variant" id="VSP_059482" description="In isoform 9.">
    <location>
        <begin position="170"/>
        <end position="1230"/>
    </location>
</feature>
<feature type="splice variant" id="VSP_059483" description="In isoform 4 and isoform 6.">
    <original>K</original>
    <variation>KQ</variation>
    <location>
        <position position="326"/>
    </location>
</feature>
<feature type="splice variant" id="VSP_059484" description="In isoform 1, isoform 4, isoform 8 and isoform 2.">
    <original>Q</original>
    <variation>QFQLPDQRTW</variation>
    <location>
        <position position="859"/>
    </location>
</feature>
<feature type="splice variant" id="VSP_059485" description="In isoform 8.">
    <original>PYRCKYC</original>
    <variation>LKNKDLQ</variation>
    <location>
        <begin position="939"/>
        <end position="945"/>
    </location>
</feature>
<feature type="splice variant" id="VSP_059486" description="In isoform 8.">
    <location>
        <begin position="946"/>
        <end position="1230"/>
    </location>
</feature>
<feature type="sequence variant" id="VAR_051183" description="In dbSNP:rs7622799.">
    <original>P</original>
    <variation>S</variation>
    <location>
        <position position="120"/>
    </location>
</feature>
<feature type="sequence variant" id="VAR_061928" description="In dbSNP:rs34896995.">
    <original>Q</original>
    <variation>R</variation>
    <location>
        <position position="295"/>
    </location>
</feature>
<feature type="sequence variant" id="VAR_076308" description="In RUSAT2; alters transcriptional regulation; dbSNP:rs864309724." evidence="13">
    <original>R</original>
    <variation>W</variation>
    <location>
        <position position="929"/>
    </location>
</feature>
<feature type="sequence variant" id="VAR_076309" description="In RUSAT2; alters transcriptional regulation; dbSNP:rs864309723." evidence="13">
    <original>H</original>
    <variation>R</variation>
    <location>
        <position position="930"/>
    </location>
</feature>
<feature type="sequence variant" id="VAR_076310" description="In RUSAT2; alters transcriptional regulation; dbSNP:rs864309722." evidence="13">
    <original>T</original>
    <variation>A</variation>
    <location>
        <position position="935"/>
    </location>
</feature>
<feature type="mutagenesis site" description="Partial loss of interaction with CTBP1. Loss of interaction with CTBP1; when associated with 586-A-S-775." evidence="8">
    <original>DL</original>
    <variation>AS</variation>
    <location>
        <begin position="743"/>
        <end position="744"/>
    </location>
</feature>
<feature type="mutagenesis site" description="Partial loss of interaction with CTBP1. Loss of interaction with CTBP1; when associated with 555-A-S-744." evidence="8">
    <original>DL</original>
    <variation>AS</variation>
    <location>
        <begin position="774"/>
        <end position="775"/>
    </location>
</feature>
<feature type="sequence conflict" description="In Ref. 2; AAB05840." evidence="19" ref="2">
    <original>IL</original>
    <variation>VR</variation>
    <location>
        <begin position="126"/>
        <end position="127"/>
    </location>
</feature>
<feature type="sequence conflict" description="In Ref. 6; CAE45952." evidence="19" ref="6">
    <original>Q</original>
    <variation>R</variation>
    <location>
        <position position="208"/>
    </location>
</feature>
<feature type="sequence conflict" description="In Ref. 6; CAE45952." evidence="19" ref="6">
    <original>L</original>
    <variation>P</variation>
    <location>
        <position position="363"/>
    </location>
</feature>
<feature type="sequence conflict" description="In Ref. 4; BAF85554." evidence="19" ref="4">
    <original>F</original>
    <variation>S</variation>
    <location>
        <position position="489"/>
    </location>
</feature>
<feature type="sequence conflict" description="In Ref. 1; CAA38735." evidence="19" ref="1">
    <original>F</original>
    <variation>V</variation>
    <location>
        <position position="491"/>
    </location>
</feature>
<feature type="sequence conflict" description="In Ref. 6; CAI46086." evidence="19" ref="6">
    <original>S</original>
    <variation>P</variation>
    <location>
        <position position="631"/>
    </location>
</feature>
<feature type="sequence conflict" description="In Ref. 6; CAE45952." evidence="19" ref="6">
    <original>K</original>
    <variation>R</variation>
    <location>
        <position position="731"/>
    </location>
</feature>
<feature type="sequence conflict" description="In Ref. 4; BAF85554." evidence="19" ref="4">
    <original>K</original>
    <variation>R</variation>
    <location>
        <position position="909"/>
    </location>
</feature>
<feature type="sequence conflict" description="In Ref. 6; CAI46086." evidence="19" ref="6">
    <original>I</original>
    <variation>V</variation>
    <location>
        <position position="920"/>
    </location>
</feature>
<feature type="sequence conflict" description="In Ref. 1; CAA38735." evidence="19" ref="1">
    <original>D</original>
    <variation>Y</variation>
    <location>
        <position position="975"/>
    </location>
</feature>
<feature type="sequence conflict" description="In Ref. 1; CAA38735." evidence="19" ref="1">
    <original>D</original>
    <variation>E</variation>
    <location>
        <position position="1054"/>
    </location>
</feature>
<feature type="sequence conflict" description="In Ref. 1; CAA38735." evidence="19" ref="1">
    <original>T</original>
    <variation>P</variation>
    <location>
        <position position="1060"/>
    </location>
</feature>
<feature type="sequence conflict" description="In Ref. 1; CAA38735." evidence="19" ref="1">
    <original>N</original>
    <variation>Y</variation>
    <location>
        <position position="1085"/>
    </location>
</feature>
<feature type="sequence conflict" description="In Ref. 4; BAF85554." evidence="19" ref="4">
    <original>V</original>
    <variation>A</variation>
    <location>
        <position position="1171"/>
    </location>
</feature>
<feature type="sequence conflict" description="In Ref. 11; AAB37456." evidence="19" ref="11">
    <original>AYAMM</original>
    <variation>VQIFP</variation>
    <location>
        <begin position="1187"/>
        <end position="1191"/>
    </location>
</feature>
<feature type="sequence conflict" description="In Ref. 6; CAE45952." evidence="19" ref="6">
    <original>L</original>
    <variation>P</variation>
    <location>
        <position position="1192"/>
    </location>
</feature>
<feature type="cross-link" description="Glycyl lysine isopeptide (Lys-Gly) (interchain with G-Cter in SUMO2)" evidence="25">
    <location sequence="Q03112-1">
        <position position="658"/>
    </location>
</feature>
<feature type="cross-link" description="Glycyl lysine isopeptide (Lys-Gly) (interchain with G-Cter in SUMO2)" evidence="25">
    <location sequence="Q03112-3">
        <position position="846"/>
    </location>
</feature>
<feature type="cross-link" description="Glycyl lysine isopeptide (Lys-Gly) (interchain with G-Cter in SUMO2)" evidence="25">
    <location sequence="Q03112-4">
        <position position="202"/>
    </location>
</feature>
<feature type="cross-link" description="Glycyl lysine isopeptide (Lys-Gly) (interchain with G-Cter in SUMO2)" evidence="25">
    <location sequence="Q03112-4">
        <position position="723"/>
    </location>
</feature>
<feature type="cross-link" description="Glycyl lysine isopeptide (Lys-Gly) (interchain with G-Cter in SUMO2)" evidence="25">
    <location sequence="Q03112-6">
        <position position="138"/>
    </location>
</feature>
<feature type="cross-link" description="Glycyl lysine isopeptide (Lys-Gly) (interchain with G-Cter in SUMO2)" evidence="25">
    <location sequence="Q03112-8">
        <position position="846"/>
    </location>
</feature>
<sequence length="1230" mass="138136">MRSKGRARKLATNNECVYGNYPEIPLEEMPDADGVASTPSLNIQEPCSPATSSEAFTPKEGSPYKAPIYIPDDIPIPAEFELRESNMPGAGLGIWTKRKIEVGEKFGPYVGEQRSNLKDPSYGWEILDEFYNVKFCIDASQPDVGSWLKYIRFAGCYDQHNLVACQINDQIFYRVVADIAPGEELLLFMKSEDYPHETMAPDIHEERQYRCEDCDQLFESKAELADHQKFPCSTPHSAFSMVEEDFQQKLESENDLQEIHTIQECKECDQVFPDLQSLEKHMLSHTEEREYKCDQCPKAFNWKSNLIRHQMSHDSGKHYECENCAKVFTDPSNLQRHIRSQHVGARAHACPECGKTFATSSGLKQHKHIHSSVKPFICEVCHKSYTQFSNLCRHKRMHADCRTQIKCKDCGQMFSTTSSLNKHRRFCEGKNHFAAGGFFGQGISLPGTPAMDKTSMVNMSHANPGLADYFGANRHPAGLTFPTAPGFSFSFPGLFPSGLYHRPPLIPASSPVKGLSSTEQTNKSQSPLMTHPQILPATQDILKALSKHPSVGDNKPVELQPERSSEERPFEKISDQSESSDLDDVSTPSGSDLETTSGSDLESDIESDKEKFKENGKMFKDKVSPLQNLASINNKKEYSNHSIFSPSLEEQTAVSGAVNDSIKAIASIAEKYFGSTGLVGLQDKKVGALPYPSMFPLPFFPAFSQSMYPFPDRDLRSLPLKMEPQSPGEVKKLQKGSSESPFDLTTKRKDEKPLTPVPSKPPVTPATSQDQPLDLSMGSRSRASGTKLTEPRKNHVFGGKKGSNVESRPASDGSLQHARPTPFFMDPIYRVEKRKLTDPLEALKEKYLRPSPGFLFHPQMSAIENMAEKLESFSALKPEASELLQSVPSMFNFRAPPNALPENLLRKGKERYTCRYCGKIFPRSANLTRHLRTHTGEQPYRCKYCDRSFSISSNLQRHVRNIHNKEKPFKCHLCDRCFGQQTNLDRHLKKHENGNMSGTATSSPHSELESTGAILDDKEDAYFTEIRNFIGNSNHGSQSPRNVEERMNGSHFKDEKALVTSQNSDLLDDEEVEDEVLLDEEDEDNDITGKTGKEPVTSNLHEGNPEDDYEETSALEMSCKTSPVRYKEEEYKSGLSALDHIRHFTDSLKMRKMEDNQYSEAELSSFSTSHVPEELKQPLHRKSKSQAYAMMLSLSDKESLHSTSHSSSNVWHSMARAAAESSAIQSISHV</sequence>
<evidence type="ECO:0000250" key="1"/>
<evidence type="ECO:0000250" key="2">
    <source>
        <dbReference type="UniProtKB" id="P14404"/>
    </source>
</evidence>
<evidence type="ECO:0000255" key="3"/>
<evidence type="ECO:0000255" key="4">
    <source>
        <dbReference type="PROSITE-ProRule" id="PRU00042"/>
    </source>
</evidence>
<evidence type="ECO:0000255" key="5">
    <source>
        <dbReference type="PROSITE-ProRule" id="PRU00190"/>
    </source>
</evidence>
<evidence type="ECO:0000256" key="6">
    <source>
        <dbReference type="SAM" id="MobiDB-lite"/>
    </source>
</evidence>
<evidence type="ECO:0000269" key="7">
    <source>
    </source>
</evidence>
<evidence type="ECO:0000269" key="8">
    <source>
    </source>
</evidence>
<evidence type="ECO:0000269" key="9">
    <source>
    </source>
</evidence>
<evidence type="ECO:0000269" key="10">
    <source>
    </source>
</evidence>
<evidence type="ECO:0000269" key="11">
    <source>
    </source>
</evidence>
<evidence type="ECO:0000269" key="12">
    <source>
    </source>
</evidence>
<evidence type="ECO:0000269" key="13">
    <source>
    </source>
</evidence>
<evidence type="ECO:0000269" key="14">
    <source>
    </source>
</evidence>
<evidence type="ECO:0000269" key="15">
    <source>
    </source>
</evidence>
<evidence type="ECO:0000269" key="16">
    <source>
    </source>
</evidence>
<evidence type="ECO:0000303" key="17">
    <source>
    </source>
</evidence>
<evidence type="ECO:0000303" key="18">
    <source>
    </source>
</evidence>
<evidence type="ECO:0000305" key="19"/>
<evidence type="ECO:0000312" key="20">
    <source>
        <dbReference type="HGNC" id="HGNC:3498"/>
    </source>
</evidence>
<evidence type="ECO:0007744" key="21">
    <source>
    </source>
</evidence>
<evidence type="ECO:0007744" key="22">
    <source>
    </source>
</evidence>
<evidence type="ECO:0007744" key="23">
    <source>
    </source>
</evidence>
<evidence type="ECO:0007744" key="24">
    <source>
    </source>
</evidence>
<evidence type="ECO:0007744" key="25">
    <source>
    </source>
</evidence>
<dbReference type="EC" id="2.1.1.367" evidence="2"/>
<dbReference type="EMBL" id="X54989">
    <property type="protein sequence ID" value="CAA38735.1"/>
    <property type="molecule type" value="mRNA"/>
</dbReference>
<dbReference type="EMBL" id="U43292">
    <property type="protein sequence ID" value="AAB05839.1"/>
    <property type="molecule type" value="mRNA"/>
</dbReference>
<dbReference type="EMBL" id="U43293">
    <property type="protein sequence ID" value="AAB05840.1"/>
    <property type="molecule type" value="mRNA"/>
</dbReference>
<dbReference type="EMBL" id="AK292865">
    <property type="protein sequence ID" value="BAF85554.1"/>
    <property type="molecule type" value="mRNA"/>
</dbReference>
<dbReference type="EMBL" id="AK304098">
    <property type="protein sequence ID" value="BAH14103.1"/>
    <property type="molecule type" value="mRNA"/>
</dbReference>
<dbReference type="EMBL" id="CR541866">
    <property type="protein sequence ID" value="CAG46664.1"/>
    <property type="molecule type" value="mRNA"/>
</dbReference>
<dbReference type="EMBL" id="CR541886">
    <property type="protein sequence ID" value="CAG46684.1"/>
    <property type="molecule type" value="mRNA"/>
</dbReference>
<dbReference type="EMBL" id="BX640908">
    <property type="protein sequence ID" value="CAE45952.1"/>
    <property type="molecule type" value="mRNA"/>
</dbReference>
<dbReference type="EMBL" id="BX647613">
    <property type="protein sequence ID" value="CAI46086.1"/>
    <property type="molecule type" value="mRNA"/>
</dbReference>
<dbReference type="EMBL" id="AC007849">
    <property type="status" value="NOT_ANNOTATED_CDS"/>
    <property type="molecule type" value="Genomic_DNA"/>
</dbReference>
<dbReference type="EMBL" id="AC024099">
    <property type="status" value="NOT_ANNOTATED_CDS"/>
    <property type="molecule type" value="Genomic_DNA"/>
</dbReference>
<dbReference type="EMBL" id="AC069220">
    <property type="status" value="NOT_ANNOTATED_CDS"/>
    <property type="molecule type" value="Genomic_DNA"/>
</dbReference>
<dbReference type="EMBL" id="AC074033">
    <property type="status" value="NOT_ANNOTATED_CDS"/>
    <property type="molecule type" value="Genomic_DNA"/>
</dbReference>
<dbReference type="EMBL" id="AC078985">
    <property type="status" value="NOT_ANNOTATED_CDS"/>
    <property type="molecule type" value="Genomic_DNA"/>
</dbReference>
<dbReference type="EMBL" id="KF457717">
    <property type="status" value="NOT_ANNOTATED_CDS"/>
    <property type="molecule type" value="Genomic_DNA"/>
</dbReference>
<dbReference type="EMBL" id="CH471052">
    <property type="protein sequence ID" value="EAW78549.1"/>
    <property type="molecule type" value="Genomic_DNA"/>
</dbReference>
<dbReference type="EMBL" id="CH471052">
    <property type="protein sequence ID" value="EAW78553.1"/>
    <property type="molecule type" value="Genomic_DNA"/>
</dbReference>
<dbReference type="EMBL" id="CH471052">
    <property type="protein sequence ID" value="EAW78556.1"/>
    <property type="molecule type" value="Genomic_DNA"/>
</dbReference>
<dbReference type="EMBL" id="CH471052">
    <property type="protein sequence ID" value="EAW78557.1"/>
    <property type="molecule type" value="Genomic_DNA"/>
</dbReference>
<dbReference type="EMBL" id="BC031019">
    <property type="protein sequence ID" value="AAH31019.1"/>
    <property type="molecule type" value="mRNA"/>
</dbReference>
<dbReference type="EMBL" id="BC069498">
    <property type="protein sequence ID" value="AAH69498.1"/>
    <property type="molecule type" value="mRNA"/>
</dbReference>
<dbReference type="EMBL" id="BC130520">
    <property type="protein sequence ID" value="AAI30521.1"/>
    <property type="status" value="ALT_INIT"/>
    <property type="molecule type" value="mRNA"/>
</dbReference>
<dbReference type="EMBL" id="BC143951">
    <property type="protein sequence ID" value="AAI43952.1"/>
    <property type="molecule type" value="mRNA"/>
</dbReference>
<dbReference type="EMBL" id="BC143952">
    <property type="protein sequence ID" value="AAI43953.1"/>
    <property type="molecule type" value="mRNA"/>
</dbReference>
<dbReference type="EMBL" id="S69002">
    <property type="protein sequence ID" value="AAB29907.1"/>
    <property type="status" value="ALT_SEQ"/>
    <property type="molecule type" value="mRNA"/>
</dbReference>
<dbReference type="EMBL" id="S82592">
    <property type="protein sequence ID" value="AAB37456.1"/>
    <property type="molecule type" value="mRNA"/>
</dbReference>
<dbReference type="CCDS" id="CCDS3205.1">
    <molecule id="Q03112-1"/>
</dbReference>
<dbReference type="CCDS" id="CCDS54669.1">
    <molecule id="Q03112-5"/>
</dbReference>
<dbReference type="CCDS" id="CCDS54670.1">
    <molecule id="Q03112-4"/>
</dbReference>
<dbReference type="CCDS" id="CCDS93424.1">
    <molecule id="Q03112-7"/>
</dbReference>
<dbReference type="CCDS" id="CCDS93425.1">
    <molecule id="Q03112-3"/>
</dbReference>
<dbReference type="PIR" id="A60191">
    <property type="entry name" value="A60191"/>
</dbReference>
<dbReference type="PIR" id="S41705">
    <property type="entry name" value="S41705"/>
</dbReference>
<dbReference type="RefSeq" id="NP_001098547.3">
    <molecule id="Q03112-4"/>
    <property type="nucleotide sequence ID" value="NM_001105077.4"/>
</dbReference>
<dbReference type="RefSeq" id="NP_001098548.2">
    <molecule id="Q03112-1"/>
    <property type="nucleotide sequence ID" value="NM_001105078.4"/>
</dbReference>
<dbReference type="RefSeq" id="NP_001157471.1">
    <molecule id="Q03112-6"/>
    <property type="nucleotide sequence ID" value="NM_001163999.2"/>
</dbReference>
<dbReference type="RefSeq" id="NP_001157472.1">
    <molecule id="Q03112-5"/>
    <property type="nucleotide sequence ID" value="NM_001164000.2"/>
</dbReference>
<dbReference type="RefSeq" id="NP_001192123.1">
    <molecule id="Q03112-1"/>
    <property type="nucleotide sequence ID" value="NM_001205194.2"/>
</dbReference>
<dbReference type="RefSeq" id="NP_001353395.1">
    <molecule id="Q03112-7"/>
    <property type="nucleotide sequence ID" value="NM_001366466.2"/>
</dbReference>
<dbReference type="RefSeq" id="NP_001353398.1">
    <molecule id="Q03112-1"/>
    <property type="nucleotide sequence ID" value="NM_001366469.2"/>
</dbReference>
<dbReference type="RefSeq" id="NP_001353399.1">
    <molecule id="Q03112-6"/>
    <property type="nucleotide sequence ID" value="NM_001366470.2"/>
</dbReference>
<dbReference type="RefSeq" id="NP_001353400.1">
    <molecule id="Q03112-5"/>
    <property type="nucleotide sequence ID" value="NM_001366471.2"/>
</dbReference>
<dbReference type="RefSeq" id="NP_001353401.1">
    <molecule id="Q03112-5"/>
    <property type="nucleotide sequence ID" value="NM_001366472.2"/>
</dbReference>
<dbReference type="RefSeq" id="NP_004982.2">
    <molecule id="Q03112-3"/>
    <property type="nucleotide sequence ID" value="NM_004991.4"/>
</dbReference>
<dbReference type="RefSeq" id="NP_005232.2">
    <molecule id="Q03112-1"/>
    <property type="nucleotide sequence ID" value="NM_005241.4"/>
</dbReference>
<dbReference type="RefSeq" id="XP_005247272.1">
    <property type="nucleotide sequence ID" value="XM_005247215.3"/>
</dbReference>
<dbReference type="RefSeq" id="XP_005247276.1">
    <property type="nucleotide sequence ID" value="XM_005247219.2"/>
</dbReference>
<dbReference type="RefSeq" id="XP_005247277.1">
    <property type="nucleotide sequence ID" value="XM_005247220.2"/>
</dbReference>
<dbReference type="RefSeq" id="XP_005247278.1">
    <property type="nucleotide sequence ID" value="XM_005247221.2"/>
</dbReference>
<dbReference type="RefSeq" id="XP_005247280.1">
    <property type="nucleotide sequence ID" value="XM_005247223.2"/>
</dbReference>
<dbReference type="RefSeq" id="XP_016861363.1">
    <property type="nucleotide sequence ID" value="XM_017005874.1"/>
</dbReference>
<dbReference type="RefSeq" id="XP_016861364.1">
    <property type="nucleotide sequence ID" value="XM_017005875.1"/>
</dbReference>
<dbReference type="RefSeq" id="XP_016861365.1">
    <property type="nucleotide sequence ID" value="XM_017005876.1"/>
</dbReference>
<dbReference type="RefSeq" id="XP_047303642.1">
    <molecule id="Q03112-6"/>
    <property type="nucleotide sequence ID" value="XM_047447686.1"/>
</dbReference>
<dbReference type="RefSeq" id="XP_047303643.1">
    <molecule id="Q03112-6"/>
    <property type="nucleotide sequence ID" value="XM_047447687.1"/>
</dbReference>
<dbReference type="PDB" id="6BW3">
    <property type="method" value="X-ray"/>
    <property type="resolution" value="2.20 A"/>
    <property type="chains" value="B/D=1-12"/>
</dbReference>
<dbReference type="PDBsum" id="6BW3"/>
<dbReference type="SMR" id="Q03112"/>
<dbReference type="BioGRID" id="108423">
    <property type="interactions" value="359"/>
</dbReference>
<dbReference type="CORUM" id="Q03112"/>
<dbReference type="DIP" id="DIP-38639N"/>
<dbReference type="ELM" id="Q03112"/>
<dbReference type="FunCoup" id="Q03112">
    <property type="interactions" value="3017"/>
</dbReference>
<dbReference type="IntAct" id="Q03112">
    <property type="interactions" value="67"/>
</dbReference>
<dbReference type="MINT" id="Q03112"/>
<dbReference type="STRING" id="9606.ENSP00000264674"/>
<dbReference type="ChEMBL" id="CHEMBL5214865"/>
<dbReference type="GlyGen" id="Q03112">
    <property type="glycosylation" value="4 sites, 1 O-linked glycan (1 site)"/>
</dbReference>
<dbReference type="iPTMnet" id="Q03112"/>
<dbReference type="PhosphoSitePlus" id="Q03112"/>
<dbReference type="BioMuta" id="MECOM"/>
<dbReference type="DMDM" id="145559472"/>
<dbReference type="jPOST" id="Q03112"/>
<dbReference type="MassIVE" id="Q03112"/>
<dbReference type="PaxDb" id="9606-ENSP00000264674"/>
<dbReference type="PeptideAtlas" id="Q03112"/>
<dbReference type="ProteomicsDB" id="17508"/>
<dbReference type="ProteomicsDB" id="58186">
    <molecule id="Q03112-1"/>
</dbReference>
<dbReference type="ProteomicsDB" id="58187">
    <molecule id="Q03112-3"/>
</dbReference>
<dbReference type="ProteomicsDB" id="58188">
    <molecule id="Q03112-4"/>
</dbReference>
<dbReference type="ProteomicsDB" id="58189">
    <molecule id="Q03112-5"/>
</dbReference>
<dbReference type="ProteomicsDB" id="58190">
    <molecule id="Q03112-6"/>
</dbReference>
<dbReference type="ProteomicsDB" id="59462"/>
<dbReference type="Antibodypedia" id="18615">
    <property type="antibodies" value="432 antibodies from 34 providers"/>
</dbReference>
<dbReference type="DNASU" id="2122"/>
<dbReference type="Ensembl" id="ENST00000264674.7">
    <molecule id="Q03112-4"/>
    <property type="protein sequence ID" value="ENSP00000264674.3"/>
    <property type="gene ID" value="ENSG00000085276.19"/>
</dbReference>
<dbReference type="Ensembl" id="ENST00000464456.5">
    <molecule id="Q03112-5"/>
    <property type="protein sequence ID" value="ENSP00000419770.1"/>
    <property type="gene ID" value="ENSG00000085276.19"/>
</dbReference>
<dbReference type="Ensembl" id="ENST00000468789.5">
    <molecule id="Q03112-1"/>
    <property type="protein sequence ID" value="ENSP00000419995.1"/>
    <property type="gene ID" value="ENSG00000085276.19"/>
</dbReference>
<dbReference type="Ensembl" id="ENST00000494292.6">
    <molecule id="Q03112-7"/>
    <property type="protein sequence ID" value="ENSP00000417899.1"/>
    <property type="gene ID" value="ENSG00000085276.19"/>
</dbReference>
<dbReference type="Ensembl" id="ENST00000628990.2">
    <molecule id="Q03112-1"/>
    <property type="protein sequence ID" value="ENSP00000486104.1"/>
    <property type="gene ID" value="ENSG00000085276.19"/>
</dbReference>
<dbReference type="Ensembl" id="ENST00000651503.2">
    <molecule id="Q03112-3"/>
    <property type="protein sequence ID" value="ENSP00000498411.1"/>
    <property type="gene ID" value="ENSG00000085276.19"/>
</dbReference>
<dbReference type="GeneID" id="2122"/>
<dbReference type="KEGG" id="hsa:2122"/>
<dbReference type="MANE-Select" id="ENST00000651503.2">
    <molecule id="Q03112-3"/>
    <property type="protein sequence ID" value="ENSP00000498411.1"/>
    <property type="RefSeq nucleotide sequence ID" value="NM_004991.4"/>
    <property type="RefSeq protein sequence ID" value="NP_004982.2"/>
</dbReference>
<dbReference type="UCSC" id="uc003ffi.3">
    <molecule id="Q03112-7"/>
    <property type="organism name" value="human"/>
</dbReference>
<dbReference type="AGR" id="HGNC:3498"/>
<dbReference type="CTD" id="2122"/>
<dbReference type="DisGeNET" id="2122"/>
<dbReference type="GeneCards" id="MECOM"/>
<dbReference type="HGNC" id="HGNC:3498">
    <property type="gene designation" value="MECOM"/>
</dbReference>
<dbReference type="HPA" id="ENSG00000085276">
    <property type="expression patterns" value="Tissue enhanced (stomach)"/>
</dbReference>
<dbReference type="MalaCards" id="MECOM"/>
<dbReference type="MIM" id="165215">
    <property type="type" value="gene"/>
</dbReference>
<dbReference type="MIM" id="600049">
    <property type="type" value="gene"/>
</dbReference>
<dbReference type="MIM" id="616738">
    <property type="type" value="phenotype"/>
</dbReference>
<dbReference type="neXtProt" id="NX_Q03112"/>
<dbReference type="OpenTargets" id="ENSG00000085276"/>
<dbReference type="Orphanet" id="402020">
    <property type="disease" value="Acute myeloid leukemia with inv(3)(q21q26.2) or t(3;3)(q21;q26.2)"/>
</dbReference>
<dbReference type="Orphanet" id="71289">
    <property type="disease" value="Radio-ulnar synostosis-amegakaryocytic thrombocytopenia syndrome"/>
</dbReference>
<dbReference type="PharmGKB" id="PA27912"/>
<dbReference type="VEuPathDB" id="HostDB:ENSG00000085276"/>
<dbReference type="eggNOG" id="KOG1721">
    <property type="taxonomic scope" value="Eukaryota"/>
</dbReference>
<dbReference type="GeneTree" id="ENSGT00940000157208"/>
<dbReference type="InParanoid" id="Q03112"/>
<dbReference type="OMA" id="NCTKVFC"/>
<dbReference type="OrthoDB" id="10004641at2759"/>
<dbReference type="PAN-GO" id="Q03112">
    <property type="GO annotations" value="4 GO annotations based on evolutionary models"/>
</dbReference>
<dbReference type="PhylomeDB" id="Q03112"/>
<dbReference type="TreeFam" id="TF315309"/>
<dbReference type="PathwayCommons" id="Q03112"/>
<dbReference type="Reactome" id="R-HSA-3214841">
    <property type="pathway name" value="PKMTs methylate histone lysines"/>
</dbReference>
<dbReference type="Reactome" id="R-HSA-8943724">
    <property type="pathway name" value="Regulation of PTEN gene transcription"/>
</dbReference>
<dbReference type="Reactome" id="R-HSA-9830364">
    <property type="pathway name" value="Formation of the nephric duct"/>
</dbReference>
<dbReference type="SignaLink" id="Q03112"/>
<dbReference type="SIGNOR" id="Q03112"/>
<dbReference type="BioGRID-ORCS" id="2122">
    <property type="hits" value="43 hits in 1183 CRISPR screens"/>
</dbReference>
<dbReference type="ChiTaRS" id="MECOM">
    <property type="organism name" value="human"/>
</dbReference>
<dbReference type="GeneWiki" id="MECOM"/>
<dbReference type="GenomeRNAi" id="2122"/>
<dbReference type="Pharos" id="Q03112">
    <property type="development level" value="Tbio"/>
</dbReference>
<dbReference type="PRO" id="PR:Q03112"/>
<dbReference type="Proteomes" id="UP000005640">
    <property type="component" value="Chromosome 3"/>
</dbReference>
<dbReference type="RNAct" id="Q03112">
    <property type="molecule type" value="protein"/>
</dbReference>
<dbReference type="Bgee" id="ENSG00000085276">
    <property type="expression patterns" value="Expressed in cardia of stomach and 191 other cell types or tissues"/>
</dbReference>
<dbReference type="ExpressionAtlas" id="Q03112">
    <property type="expression patterns" value="baseline and differential"/>
</dbReference>
<dbReference type="GO" id="GO:0005829">
    <property type="term" value="C:cytosol"/>
    <property type="evidence" value="ECO:0000304"/>
    <property type="project" value="Reactome"/>
</dbReference>
<dbReference type="GO" id="GO:0016607">
    <property type="term" value="C:nuclear speck"/>
    <property type="evidence" value="ECO:0000314"/>
    <property type="project" value="HPA"/>
</dbReference>
<dbReference type="GO" id="GO:0005654">
    <property type="term" value="C:nucleoplasm"/>
    <property type="evidence" value="ECO:0000304"/>
    <property type="project" value="Reactome"/>
</dbReference>
<dbReference type="GO" id="GO:0005634">
    <property type="term" value="C:nucleus"/>
    <property type="evidence" value="ECO:0000314"/>
    <property type="project" value="UniProtKB"/>
</dbReference>
<dbReference type="GO" id="GO:0003677">
    <property type="term" value="F:DNA binding"/>
    <property type="evidence" value="ECO:0000250"/>
    <property type="project" value="UniProtKB"/>
</dbReference>
<dbReference type="GO" id="GO:0001228">
    <property type="term" value="F:DNA-binding transcription activator activity, RNA polymerase II-specific"/>
    <property type="evidence" value="ECO:0000318"/>
    <property type="project" value="GO_Central"/>
</dbReference>
<dbReference type="GO" id="GO:0003700">
    <property type="term" value="F:DNA-binding transcription factor activity"/>
    <property type="evidence" value="ECO:0000314"/>
    <property type="project" value="UniProtKB"/>
</dbReference>
<dbReference type="GO" id="GO:0140938">
    <property type="term" value="F:histone H3 methyltransferase activity"/>
    <property type="evidence" value="ECO:0000304"/>
    <property type="project" value="Reactome"/>
</dbReference>
<dbReference type="GO" id="GO:0046974">
    <property type="term" value="F:histone H3K9 methyltransferase activity"/>
    <property type="evidence" value="ECO:0000250"/>
    <property type="project" value="UniProtKB"/>
</dbReference>
<dbReference type="GO" id="GO:0140948">
    <property type="term" value="F:histone H3K9 monomethyltransferase activity"/>
    <property type="evidence" value="ECO:0007669"/>
    <property type="project" value="UniProtKB-EC"/>
</dbReference>
<dbReference type="GO" id="GO:0140947">
    <property type="term" value="F:histone H3K9me2 methyltransferase activity"/>
    <property type="evidence" value="ECO:0007669"/>
    <property type="project" value="RHEA"/>
</dbReference>
<dbReference type="GO" id="GO:0042803">
    <property type="term" value="F:protein homodimerization activity"/>
    <property type="evidence" value="ECO:0000314"/>
    <property type="project" value="UniProtKB"/>
</dbReference>
<dbReference type="GO" id="GO:0000978">
    <property type="term" value="F:RNA polymerase II cis-regulatory region sequence-specific DNA binding"/>
    <property type="evidence" value="ECO:0000318"/>
    <property type="project" value="GO_Central"/>
</dbReference>
<dbReference type="GO" id="GO:0008270">
    <property type="term" value="F:zinc ion binding"/>
    <property type="evidence" value="ECO:0007669"/>
    <property type="project" value="UniProtKB-KW"/>
</dbReference>
<dbReference type="GO" id="GO:0006915">
    <property type="term" value="P:apoptotic process"/>
    <property type="evidence" value="ECO:0007669"/>
    <property type="project" value="UniProtKB-KW"/>
</dbReference>
<dbReference type="GO" id="GO:0071425">
    <property type="term" value="P:hematopoietic stem cell proliferation"/>
    <property type="evidence" value="ECO:0000250"/>
    <property type="project" value="UniProtKB"/>
</dbReference>
<dbReference type="GO" id="GO:0070828">
    <property type="term" value="P:heterochromatin organization"/>
    <property type="evidence" value="ECO:0000250"/>
    <property type="project" value="UniProtKB"/>
</dbReference>
<dbReference type="GO" id="GO:0032259">
    <property type="term" value="P:methylation"/>
    <property type="evidence" value="ECO:0007669"/>
    <property type="project" value="UniProtKB-KW"/>
</dbReference>
<dbReference type="GO" id="GO:0045892">
    <property type="term" value="P:negative regulation of DNA-templated transcription"/>
    <property type="evidence" value="ECO:0000314"/>
    <property type="project" value="UniProtKB"/>
</dbReference>
<dbReference type="GO" id="GO:0046329">
    <property type="term" value="P:negative regulation of JNK cascade"/>
    <property type="evidence" value="ECO:0000315"/>
    <property type="project" value="UniProtKB"/>
</dbReference>
<dbReference type="GO" id="GO:0043069">
    <property type="term" value="P:negative regulation of programmed cell death"/>
    <property type="evidence" value="ECO:0000315"/>
    <property type="project" value="UniProtKB"/>
</dbReference>
<dbReference type="GO" id="GO:0045893">
    <property type="term" value="P:positive regulation of DNA-templated transcription"/>
    <property type="evidence" value="ECO:0000314"/>
    <property type="project" value="UniProtKB"/>
</dbReference>
<dbReference type="GO" id="GO:0051726">
    <property type="term" value="P:regulation of cell cycle"/>
    <property type="evidence" value="ECO:0000314"/>
    <property type="project" value="UniProtKB"/>
</dbReference>
<dbReference type="GO" id="GO:0006357">
    <property type="term" value="P:regulation of transcription by RNA polymerase II"/>
    <property type="evidence" value="ECO:0000318"/>
    <property type="project" value="GO_Central"/>
</dbReference>
<dbReference type="CDD" id="cd19214">
    <property type="entry name" value="PR-SET_PRDM3"/>
    <property type="match status" value="1"/>
</dbReference>
<dbReference type="FunFam" id="3.30.160.60:FF:000112">
    <property type="entry name" value="Mds1 and evi1 complex locus protein"/>
    <property type="match status" value="1"/>
</dbReference>
<dbReference type="FunFam" id="3.30.160.60:FF:000126">
    <property type="entry name" value="Mds1 and evi1 complex locus protein"/>
    <property type="match status" value="1"/>
</dbReference>
<dbReference type="FunFam" id="3.30.160.60:FF:000150">
    <property type="entry name" value="Mds1 and evi1 complex locus protein"/>
    <property type="match status" value="1"/>
</dbReference>
<dbReference type="FunFam" id="3.30.160.60:FF:000159">
    <property type="entry name" value="Mds1 and evi1 complex locus protein"/>
    <property type="match status" value="1"/>
</dbReference>
<dbReference type="FunFam" id="3.30.160.60:FF:000192">
    <property type="entry name" value="Mds1 and evi1 complex locus protein"/>
    <property type="match status" value="1"/>
</dbReference>
<dbReference type="FunFam" id="2.170.270.10:FF:000025">
    <property type="entry name" value="MDS1 and EVI1 complex locus protein isoform X1"/>
    <property type="match status" value="1"/>
</dbReference>
<dbReference type="FunFam" id="3.30.160.60:FF:000929">
    <property type="entry name" value="Uncharacterized protein, isoform B"/>
    <property type="match status" value="1"/>
</dbReference>
<dbReference type="Gene3D" id="3.30.160.60">
    <property type="entry name" value="Classic Zinc Finger"/>
    <property type="match status" value="8"/>
</dbReference>
<dbReference type="Gene3D" id="2.170.270.10">
    <property type="entry name" value="SET domain"/>
    <property type="match status" value="1"/>
</dbReference>
<dbReference type="InterPro" id="IPR044411">
    <property type="entry name" value="PRDM3_PR-SET"/>
</dbReference>
<dbReference type="InterPro" id="IPR001214">
    <property type="entry name" value="SET_dom"/>
</dbReference>
<dbReference type="InterPro" id="IPR046341">
    <property type="entry name" value="SET_dom_sf"/>
</dbReference>
<dbReference type="InterPro" id="IPR050331">
    <property type="entry name" value="Zinc_finger"/>
</dbReference>
<dbReference type="InterPro" id="IPR036236">
    <property type="entry name" value="Znf_C2H2_sf"/>
</dbReference>
<dbReference type="InterPro" id="IPR013087">
    <property type="entry name" value="Znf_C2H2_type"/>
</dbReference>
<dbReference type="PANTHER" id="PTHR16515">
    <property type="entry name" value="PR DOMAIN ZINC FINGER PROTEIN"/>
    <property type="match status" value="1"/>
</dbReference>
<dbReference type="PANTHER" id="PTHR16515:SF57">
    <property type="entry name" value="ZINC FINGER PROTEIN 154-LIKE"/>
    <property type="match status" value="1"/>
</dbReference>
<dbReference type="Pfam" id="PF21549">
    <property type="entry name" value="PRDM2_PR"/>
    <property type="match status" value="1"/>
</dbReference>
<dbReference type="Pfam" id="PF00096">
    <property type="entry name" value="zf-C2H2"/>
    <property type="match status" value="8"/>
</dbReference>
<dbReference type="Pfam" id="PF13912">
    <property type="entry name" value="zf-C2H2_6"/>
    <property type="match status" value="1"/>
</dbReference>
<dbReference type="SMART" id="SM00317">
    <property type="entry name" value="SET"/>
    <property type="match status" value="1"/>
</dbReference>
<dbReference type="SMART" id="SM00355">
    <property type="entry name" value="ZnF_C2H2"/>
    <property type="match status" value="10"/>
</dbReference>
<dbReference type="SUPFAM" id="SSF57667">
    <property type="entry name" value="beta-beta-alpha zinc fingers"/>
    <property type="match status" value="5"/>
</dbReference>
<dbReference type="SUPFAM" id="SSF82199">
    <property type="entry name" value="SET domain"/>
    <property type="match status" value="1"/>
</dbReference>
<dbReference type="PROSITE" id="PS50280">
    <property type="entry name" value="SET"/>
    <property type="match status" value="1"/>
</dbReference>
<dbReference type="PROSITE" id="PS00028">
    <property type="entry name" value="ZINC_FINGER_C2H2_1"/>
    <property type="match status" value="8"/>
</dbReference>
<dbReference type="PROSITE" id="PS50157">
    <property type="entry name" value="ZINC_FINGER_C2H2_2"/>
    <property type="match status" value="10"/>
</dbReference>
<keyword id="KW-0002">3D-structure</keyword>
<keyword id="KW-0007">Acetylation</keyword>
<keyword id="KW-0877">Alternative promoter usage</keyword>
<keyword id="KW-0025">Alternative splicing</keyword>
<keyword id="KW-0053">Apoptosis</keyword>
<keyword id="KW-0160">Chromosomal rearrangement</keyword>
<keyword id="KW-0963">Cytoplasm</keyword>
<keyword id="KW-0217">Developmental protein</keyword>
<keyword id="KW-0221">Differentiation</keyword>
<keyword id="KW-0225">Disease variant</keyword>
<keyword id="KW-0238">DNA-binding</keyword>
<keyword id="KW-1017">Isopeptide bond</keyword>
<keyword id="KW-0479">Metal-binding</keyword>
<keyword id="KW-0489">Methyltransferase</keyword>
<keyword id="KW-0539">Nucleus</keyword>
<keyword id="KW-0597">Phosphoprotein</keyword>
<keyword id="KW-1267">Proteomics identification</keyword>
<keyword id="KW-0656">Proto-oncogene</keyword>
<keyword id="KW-1185">Reference proteome</keyword>
<keyword id="KW-0677">Repeat</keyword>
<keyword id="KW-0804">Transcription</keyword>
<keyword id="KW-0805">Transcription regulation</keyword>
<keyword id="KW-0808">Transferase</keyword>
<keyword id="KW-0832">Ubl conjugation</keyword>
<keyword id="KW-0862">Zinc</keyword>
<keyword id="KW-0863">Zinc-finger</keyword>
<name>MECOM_HUMAN</name>
<reference key="1">
    <citation type="journal article" date="1990" name="Oncogene">
        <title>Unique expression of the human Evi-1 gene in an endometrial carcinoma cell line: sequence of cDNAs and structure of alternatively spliced transcripts.</title>
        <authorList>
            <person name="Morishita K."/>
            <person name="Parganas E."/>
            <person name="Douglass E.C."/>
            <person name="Ihle J.N."/>
        </authorList>
    </citation>
    <scope>NUCLEOTIDE SEQUENCE [MRNA] (ISOFORM 1)</scope>
    <scope>ALTERNATIVE SPLICING</scope>
</reference>
<reference key="2">
    <citation type="journal article" date="1996" name="Proc. Natl. Acad. Sci. U.S.A.">
        <title>Intergenic splicing of MDS1 and EVI1 occurs in normal tissues as well as in myeloid leukemia and produces a new member of the PR domain family.</title>
        <authorList>
            <person name="Fears S."/>
            <person name="Mathieu C."/>
            <person name="Zeleznik-Le N."/>
            <person name="Huang S."/>
            <person name="Rowley J.D."/>
            <person name="Nucifora G."/>
        </authorList>
    </citation>
    <scope>NUCLEOTIDE SEQUENCE [MRNA] (ISOFORM 9)</scope>
    <scope>NUCLEOTIDE SEQUENCE [MRNA] OF 14-127 (ISOFORMS 2/7/8)</scope>
    <scope>CHROMOSOMAL TRANSLOCATION WITH AML1</scope>
    <source>
        <tissue>Kidney</tissue>
        <tissue>Pancreas</tissue>
    </source>
</reference>
<reference key="3">
    <citation type="journal article" date="2000" name="Blood">
        <title>A novel gene, MEL1, mapped to 1p36.3 is highly homologous to the MDS1/EVI1 gene and is transcriptionally activated in t(1;3)(p36;q21)-positive leukemia cells.</title>
        <authorList>
            <person name="Mochizuki N."/>
            <person name="Shimizu S."/>
            <person name="Nagasawa T."/>
            <person name="Tanaka H."/>
            <person name="Taniwaki M."/>
            <person name="Yokota J."/>
            <person name="Morishita K."/>
        </authorList>
    </citation>
    <scope>NUCLEOTIDE SEQUENCE [MRNA] (ISOFORM 2)</scope>
</reference>
<reference key="4">
    <citation type="journal article" date="2004" name="Nat. Genet.">
        <title>Complete sequencing and characterization of 21,243 full-length human cDNAs.</title>
        <authorList>
            <person name="Ota T."/>
            <person name="Suzuki Y."/>
            <person name="Nishikawa T."/>
            <person name="Otsuki T."/>
            <person name="Sugiyama T."/>
            <person name="Irie R."/>
            <person name="Wakamatsu A."/>
            <person name="Hayashi K."/>
            <person name="Sato H."/>
            <person name="Nagai K."/>
            <person name="Kimura K."/>
            <person name="Makita H."/>
            <person name="Sekine M."/>
            <person name="Obayashi M."/>
            <person name="Nishi T."/>
            <person name="Shibahara T."/>
            <person name="Tanaka T."/>
            <person name="Ishii S."/>
            <person name="Yamamoto J."/>
            <person name="Saito K."/>
            <person name="Kawai Y."/>
            <person name="Isono Y."/>
            <person name="Nakamura Y."/>
            <person name="Nagahari K."/>
            <person name="Murakami K."/>
            <person name="Yasuda T."/>
            <person name="Iwayanagi T."/>
            <person name="Wagatsuma M."/>
            <person name="Shiratori A."/>
            <person name="Sudo H."/>
            <person name="Hosoiri T."/>
            <person name="Kaku Y."/>
            <person name="Kodaira H."/>
            <person name="Kondo H."/>
            <person name="Sugawara M."/>
            <person name="Takahashi M."/>
            <person name="Kanda K."/>
            <person name="Yokoi T."/>
            <person name="Furuya T."/>
            <person name="Kikkawa E."/>
            <person name="Omura Y."/>
            <person name="Abe K."/>
            <person name="Kamihara K."/>
            <person name="Katsuta N."/>
            <person name="Sato K."/>
            <person name="Tanikawa M."/>
            <person name="Yamazaki M."/>
            <person name="Ninomiya K."/>
            <person name="Ishibashi T."/>
            <person name="Yamashita H."/>
            <person name="Murakawa K."/>
            <person name="Fujimori K."/>
            <person name="Tanai H."/>
            <person name="Kimata M."/>
            <person name="Watanabe M."/>
            <person name="Hiraoka S."/>
            <person name="Chiba Y."/>
            <person name="Ishida S."/>
            <person name="Ono Y."/>
            <person name="Takiguchi S."/>
            <person name="Watanabe S."/>
            <person name="Yosida M."/>
            <person name="Hotuta T."/>
            <person name="Kusano J."/>
            <person name="Kanehori K."/>
            <person name="Takahashi-Fujii A."/>
            <person name="Hara H."/>
            <person name="Tanase T.-O."/>
            <person name="Nomura Y."/>
            <person name="Togiya S."/>
            <person name="Komai F."/>
            <person name="Hara R."/>
            <person name="Takeuchi K."/>
            <person name="Arita M."/>
            <person name="Imose N."/>
            <person name="Musashino K."/>
            <person name="Yuuki H."/>
            <person name="Oshima A."/>
            <person name="Sasaki N."/>
            <person name="Aotsuka S."/>
            <person name="Yoshikawa Y."/>
            <person name="Matsunawa H."/>
            <person name="Ichihara T."/>
            <person name="Shiohata N."/>
            <person name="Sano S."/>
            <person name="Moriya S."/>
            <person name="Momiyama H."/>
            <person name="Satoh N."/>
            <person name="Takami S."/>
            <person name="Terashima Y."/>
            <person name="Suzuki O."/>
            <person name="Nakagawa S."/>
            <person name="Senoh A."/>
            <person name="Mizoguchi H."/>
            <person name="Goto Y."/>
            <person name="Shimizu F."/>
            <person name="Wakebe H."/>
            <person name="Hishigaki H."/>
            <person name="Watanabe T."/>
            <person name="Sugiyama A."/>
            <person name="Takemoto M."/>
            <person name="Kawakami B."/>
            <person name="Yamazaki M."/>
            <person name="Watanabe K."/>
            <person name="Kumagai A."/>
            <person name="Itakura S."/>
            <person name="Fukuzumi Y."/>
            <person name="Fujimori Y."/>
            <person name="Komiyama M."/>
            <person name="Tashiro H."/>
            <person name="Tanigami A."/>
            <person name="Fujiwara T."/>
            <person name="Ono T."/>
            <person name="Yamada K."/>
            <person name="Fujii Y."/>
            <person name="Ozaki K."/>
            <person name="Hirao M."/>
            <person name="Ohmori Y."/>
            <person name="Kawabata A."/>
            <person name="Hikiji T."/>
            <person name="Kobatake N."/>
            <person name="Inagaki H."/>
            <person name="Ikema Y."/>
            <person name="Okamoto S."/>
            <person name="Okitani R."/>
            <person name="Kawakami T."/>
            <person name="Noguchi S."/>
            <person name="Itoh T."/>
            <person name="Shigeta K."/>
            <person name="Senba T."/>
            <person name="Matsumura K."/>
            <person name="Nakajima Y."/>
            <person name="Mizuno T."/>
            <person name="Morinaga M."/>
            <person name="Sasaki M."/>
            <person name="Togashi T."/>
            <person name="Oyama M."/>
            <person name="Hata H."/>
            <person name="Watanabe M."/>
            <person name="Komatsu T."/>
            <person name="Mizushima-Sugano J."/>
            <person name="Satoh T."/>
            <person name="Shirai Y."/>
            <person name="Takahashi Y."/>
            <person name="Nakagawa K."/>
            <person name="Okumura K."/>
            <person name="Nagase T."/>
            <person name="Nomura N."/>
            <person name="Kikuchi H."/>
            <person name="Masuho Y."/>
            <person name="Yamashita R."/>
            <person name="Nakai K."/>
            <person name="Yada T."/>
            <person name="Nakamura Y."/>
            <person name="Ohara O."/>
            <person name="Isogai T."/>
            <person name="Sugano S."/>
        </authorList>
    </citation>
    <scope>NUCLEOTIDE SEQUENCE [MRNA] (ISOFORMS 1 AND 8)</scope>
    <source>
        <tissue>Trachea</tissue>
    </source>
</reference>
<reference key="5">
    <citation type="submission" date="2004-06" db="EMBL/GenBank/DDBJ databases">
        <title>Cloning of human full open reading frames in Gateway(TM) system entry vector (pDONR201).</title>
        <authorList>
            <person name="Ebert L."/>
            <person name="Schick M."/>
            <person name="Neubert P."/>
            <person name="Schatten R."/>
            <person name="Henze S."/>
            <person name="Korn B."/>
        </authorList>
    </citation>
    <scope>NUCLEOTIDE SEQUENCE [LARGE SCALE MRNA] (ISOFORM 9)</scope>
</reference>
<reference key="6">
    <citation type="journal article" date="2007" name="BMC Genomics">
        <title>The full-ORF clone resource of the German cDNA consortium.</title>
        <authorList>
            <person name="Bechtel S."/>
            <person name="Rosenfelder H."/>
            <person name="Duda A."/>
            <person name="Schmidt C.P."/>
            <person name="Ernst U."/>
            <person name="Wellenreuther R."/>
            <person name="Mehrle A."/>
            <person name="Schuster C."/>
            <person name="Bahr A."/>
            <person name="Bloecker H."/>
            <person name="Heubner D."/>
            <person name="Hoerlein A."/>
            <person name="Michel G."/>
            <person name="Wedler H."/>
            <person name="Koehrer K."/>
            <person name="Ottenwaelder B."/>
            <person name="Poustka A."/>
            <person name="Wiemann S."/>
            <person name="Schupp I."/>
        </authorList>
    </citation>
    <scope>NUCLEOTIDE SEQUENCE [LARGE SCALE MRNA] (ISOFORM 5)</scope>
    <source>
        <tissue>Adipose tissue</tissue>
        <tissue>Fetal kidney</tissue>
    </source>
</reference>
<reference key="7">
    <citation type="journal article" date="2006" name="Nature">
        <title>The DNA sequence, annotation and analysis of human chromosome 3.</title>
        <authorList>
            <person name="Muzny D.M."/>
            <person name="Scherer S.E."/>
            <person name="Kaul R."/>
            <person name="Wang J."/>
            <person name="Yu J."/>
            <person name="Sudbrak R."/>
            <person name="Buhay C.J."/>
            <person name="Chen R."/>
            <person name="Cree A."/>
            <person name="Ding Y."/>
            <person name="Dugan-Rocha S."/>
            <person name="Gill R."/>
            <person name="Gunaratne P."/>
            <person name="Harris R.A."/>
            <person name="Hawes A.C."/>
            <person name="Hernandez J."/>
            <person name="Hodgson A.V."/>
            <person name="Hume J."/>
            <person name="Jackson A."/>
            <person name="Khan Z.M."/>
            <person name="Kovar-Smith C."/>
            <person name="Lewis L.R."/>
            <person name="Lozado R.J."/>
            <person name="Metzker M.L."/>
            <person name="Milosavljevic A."/>
            <person name="Miner G.R."/>
            <person name="Morgan M.B."/>
            <person name="Nazareth L.V."/>
            <person name="Scott G."/>
            <person name="Sodergren E."/>
            <person name="Song X.-Z."/>
            <person name="Steffen D."/>
            <person name="Wei S."/>
            <person name="Wheeler D.A."/>
            <person name="Wright M.W."/>
            <person name="Worley K.C."/>
            <person name="Yuan Y."/>
            <person name="Zhang Z."/>
            <person name="Adams C.Q."/>
            <person name="Ansari-Lari M.A."/>
            <person name="Ayele M."/>
            <person name="Brown M.J."/>
            <person name="Chen G."/>
            <person name="Chen Z."/>
            <person name="Clendenning J."/>
            <person name="Clerc-Blankenburg K.P."/>
            <person name="Chen R."/>
            <person name="Chen Z."/>
            <person name="Davis C."/>
            <person name="Delgado O."/>
            <person name="Dinh H.H."/>
            <person name="Dong W."/>
            <person name="Draper H."/>
            <person name="Ernst S."/>
            <person name="Fu G."/>
            <person name="Gonzalez-Garay M.L."/>
            <person name="Garcia D.K."/>
            <person name="Gillett W."/>
            <person name="Gu J."/>
            <person name="Hao B."/>
            <person name="Haugen E."/>
            <person name="Havlak P."/>
            <person name="He X."/>
            <person name="Hennig S."/>
            <person name="Hu S."/>
            <person name="Huang W."/>
            <person name="Jackson L.R."/>
            <person name="Jacob L.S."/>
            <person name="Kelly S.H."/>
            <person name="Kube M."/>
            <person name="Levy R."/>
            <person name="Li Z."/>
            <person name="Liu B."/>
            <person name="Liu J."/>
            <person name="Liu W."/>
            <person name="Lu J."/>
            <person name="Maheshwari M."/>
            <person name="Nguyen B.-V."/>
            <person name="Okwuonu G.O."/>
            <person name="Palmeiri A."/>
            <person name="Pasternak S."/>
            <person name="Perez L.M."/>
            <person name="Phelps K.A."/>
            <person name="Plopper F.J."/>
            <person name="Qiang B."/>
            <person name="Raymond C."/>
            <person name="Rodriguez R."/>
            <person name="Saenphimmachak C."/>
            <person name="Santibanez J."/>
            <person name="Shen H."/>
            <person name="Shen Y."/>
            <person name="Subramanian S."/>
            <person name="Tabor P.E."/>
            <person name="Verduzco D."/>
            <person name="Waldron L."/>
            <person name="Wang J."/>
            <person name="Wang J."/>
            <person name="Wang Q."/>
            <person name="Williams G.A."/>
            <person name="Wong G.K.-S."/>
            <person name="Yao Z."/>
            <person name="Zhang J."/>
            <person name="Zhang X."/>
            <person name="Zhao G."/>
            <person name="Zhou J."/>
            <person name="Zhou Y."/>
            <person name="Nelson D."/>
            <person name="Lehrach H."/>
            <person name="Reinhardt R."/>
            <person name="Naylor S.L."/>
            <person name="Yang H."/>
            <person name="Olson M."/>
            <person name="Weinstock G."/>
            <person name="Gibbs R.A."/>
        </authorList>
    </citation>
    <scope>NUCLEOTIDE SEQUENCE [LARGE SCALE GENOMIC DNA]</scope>
</reference>
<reference key="8">
    <citation type="submission" date="2005-09" db="EMBL/GenBank/DDBJ databases">
        <authorList>
            <person name="Mural R.J."/>
            <person name="Istrail S."/>
            <person name="Sutton G.G."/>
            <person name="Florea L."/>
            <person name="Halpern A.L."/>
            <person name="Mobarry C.M."/>
            <person name="Lippert R."/>
            <person name="Walenz B."/>
            <person name="Shatkay H."/>
            <person name="Dew I."/>
            <person name="Miller J.R."/>
            <person name="Flanigan M.J."/>
            <person name="Edwards N.J."/>
            <person name="Bolanos R."/>
            <person name="Fasulo D."/>
            <person name="Halldorsson B.V."/>
            <person name="Hannenhalli S."/>
            <person name="Turner R."/>
            <person name="Yooseph S."/>
            <person name="Lu F."/>
            <person name="Nusskern D.R."/>
            <person name="Shue B.C."/>
            <person name="Zheng X.H."/>
            <person name="Zhong F."/>
            <person name="Delcher A.L."/>
            <person name="Huson D.H."/>
            <person name="Kravitz S.A."/>
            <person name="Mouchard L."/>
            <person name="Reinert K."/>
            <person name="Remington K.A."/>
            <person name="Clark A.G."/>
            <person name="Waterman M.S."/>
            <person name="Eichler E.E."/>
            <person name="Adams M.D."/>
            <person name="Hunkapiller M.W."/>
            <person name="Myers E.W."/>
            <person name="Venter J.C."/>
        </authorList>
    </citation>
    <scope>NUCLEOTIDE SEQUENCE [LARGE SCALE GENOMIC DNA]</scope>
</reference>
<reference key="9">
    <citation type="journal article" date="2004" name="Genome Res.">
        <title>The status, quality, and expansion of the NIH full-length cDNA project: the Mammalian Gene Collection (MGC).</title>
        <authorList>
            <consortium name="The MGC Project Team"/>
        </authorList>
    </citation>
    <scope>NUCLEOTIDE SEQUENCE [LARGE SCALE MRNA] (ISOFORMS 4 AND 6)</scope>
    <scope>NUCLEOTIDE SEQUENCE [LARGE SCALE MRNA] (ISOFORM 9)</scope>
    <scope>NUCLEOTIDE SEQUENCE [LARGE SCALE MRNA] OF 704-1230 (ISOFORM 7)</scope>
    <source>
        <tissue>Lung</tissue>
    </source>
</reference>
<reference key="10">
    <citation type="journal article" date="1994" name="EMBO J.">
        <title>Generation of the AML1-EVI-1 fusion gene in the t(3;21)(q26;q22) causes blastic crisis in chronic myelocytic leukemia.</title>
        <authorList>
            <person name="Mitani K."/>
            <person name="Ogawa S."/>
            <person name="Tanaka T."/>
            <person name="Miyoshi H."/>
            <person name="Kurokawa M."/>
            <person name="Mano H."/>
            <person name="Yazaki Y."/>
            <person name="Ohki M."/>
            <person name="Hirai H."/>
        </authorList>
    </citation>
    <scope>NUCLEOTIDE SEQUENCE [MRNA] OF 13-1230 (ISOFORM 7)</scope>
    <scope>CHROMOSOMAL TRANSLOCATION WITH RUNX1 IN CHRONIC MYELOCYTIC LEUKEMIA</scope>
</reference>
<reference key="11">
    <citation type="journal article" date="1996" name="Oncogene">
        <title>Structurally altered Evi-1 protein generated in the 3q21q26 syndrome.</title>
        <authorList>
            <person name="Ogawa S."/>
            <person name="Kurokawa M."/>
            <person name="Tanaka T."/>
            <person name="Mitani K."/>
            <person name="Inazawa J."/>
            <person name="Hangaishi A."/>
            <person name="Tanaka K."/>
            <person name="Matsuo Y."/>
            <person name="Minowada J."/>
            <person name="Tsubota T."/>
            <person name="Yazaki Y."/>
            <person name="Hirai H."/>
        </authorList>
    </citation>
    <scope>NUCLEOTIDE SEQUENCE [MRNA] OF 1149-1191</scope>
</reference>
<reference key="12">
    <citation type="journal article" date="1998" name="Nature">
        <title>The oncoprotein Evi-1 represses TGF-beta signalling by inhibiting Smad3.</title>
        <authorList>
            <person name="Kurokawa M."/>
            <person name="Mitani K."/>
            <person name="Irie K."/>
            <person name="Matsuyama T."/>
            <person name="Takahashi T."/>
            <person name="Chiba S."/>
            <person name="Yazaki Y."/>
            <person name="Matsumoto K."/>
            <person name="Hirai H."/>
        </authorList>
    </citation>
    <scope>FUNCTION IN TGF-BETA SIGNALING</scope>
    <scope>INTERACTION WITH SMAD3 AND SMAD4</scope>
    <scope>SUBCELLULAR LOCATION</scope>
</reference>
<reference key="13">
    <citation type="journal article" date="2000" name="EMBO J.">
        <title>The evi-1 oncoprotein inhibits c-Jun N-terminal kinase and prevents stress-induced cell death.</title>
        <authorList>
            <person name="Kurokawa M."/>
            <person name="Mitani K."/>
            <person name="Yamagata T."/>
            <person name="Takahashi T."/>
            <person name="Izutsu K."/>
            <person name="Ogawa S."/>
            <person name="Moriguchi T."/>
            <person name="Nishida E."/>
            <person name="Yazaki Y."/>
            <person name="Hirai H."/>
        </authorList>
    </citation>
    <scope>FUNCTION</scope>
    <scope>INTERACTION WITH MAPK8 AND MAPK9</scope>
</reference>
<reference key="14">
    <citation type="journal article" date="2001" name="J. Biol. Chem.">
        <title>Interaction of EVI1 with cAMP-responsive element-binding protein-binding protein (CBP) and p300/CBP-associated factor (P/CAF) results in reversible acetylation of EVI1 and in co-localization in nuclear speckles.</title>
        <authorList>
            <person name="Chakraborty S."/>
            <person name="Senyuk V."/>
            <person name="Sitailo S."/>
            <person name="Chi Y."/>
            <person name="Nucifora G."/>
        </authorList>
    </citation>
    <scope>FUNCTION</scope>
    <scope>ACETYLATION</scope>
    <scope>INTERACTION WITH CREBBP; CTBP1; KAT2B AND HISTONE DEACETYLASES</scope>
    <scope>SUBCELLULAR LOCATION</scope>
    <scope>MUTAGENESIS OF 743-ASP-LEU-744 AND 774-ASP-LEU-775</scope>
</reference>
<reference key="15">
    <citation type="journal article" date="2005" name="Oncogene">
        <title>Oligomerization of Evi-1 regulated by the PR domain contributes to recruitment of corepressor CtBP.</title>
        <authorList>
            <person name="Nitta E."/>
            <person name="Izutsu K."/>
            <person name="Yamaguchi Y."/>
            <person name="Imai Y."/>
            <person name="Ogawa S."/>
            <person name="Chiba S."/>
            <person name="Kurokawa M."/>
            <person name="Hirai H."/>
        </authorList>
    </citation>
    <scope>FUNCTION</scope>
    <scope>ALTERNATIVE SPLICING (ISOFORMS 1 AND 2)</scope>
    <scope>HOMOOLIGOMERIZATION</scope>
    <scope>INTERACTION WITH CTBP1 AND SMAD3</scope>
    <scope>SUBCELLULAR LOCATION</scope>
</reference>
<reference key="16">
    <citation type="journal article" date="2006" name="Cell">
        <title>Global, in vivo, and site-specific phosphorylation dynamics in signaling networks.</title>
        <authorList>
            <person name="Olsen J.V."/>
            <person name="Blagoev B."/>
            <person name="Gnad F."/>
            <person name="Macek B."/>
            <person name="Kumar C."/>
            <person name="Mortensen P."/>
            <person name="Mann M."/>
        </authorList>
    </citation>
    <scope>IDENTIFICATION BY MASS SPECTROMETRY [LARGE SCALE ANALYSIS]</scope>
    <source>
        <tissue>Cervix carcinoma</tissue>
    </source>
</reference>
<reference key="17">
    <citation type="journal article" date="2006" name="Oncogene">
        <title>Evi1 is a survival factor which conveys resistance to both TGFbeta- and taxol-mediated cell death via PI3K/AKT.</title>
        <authorList>
            <person name="Liu Y."/>
            <person name="Chen L."/>
            <person name="Ko T.C."/>
            <person name="Fields A.P."/>
            <person name="Thompson E.A."/>
        </authorList>
    </citation>
    <scope>FUNCTION IN APOPTOSIS</scope>
</reference>
<reference key="18">
    <citation type="journal article" date="2008" name="J. Proteome Res.">
        <title>Combining protein-based IMAC, peptide-based IMAC, and MudPIT for efficient phosphoproteomic analysis.</title>
        <authorList>
            <person name="Cantin G.T."/>
            <person name="Yi W."/>
            <person name="Lu B."/>
            <person name="Park S.K."/>
            <person name="Xu T."/>
            <person name="Lee J.-D."/>
            <person name="Yates J.R. III"/>
        </authorList>
    </citation>
    <scope>IDENTIFICATION BY MASS SPECTROMETRY [LARGE SCALE ANALYSIS]</scope>
    <source>
        <tissue>Cervix carcinoma</tissue>
    </source>
</reference>
<reference key="19">
    <citation type="journal article" date="2009" name="Oncogene">
        <title>Pbx1 is a downstream target of Evi-1 in hematopoietic stem/progenitors and leukemic cells.</title>
        <authorList>
            <person name="Shimabe M."/>
            <person name="Goyama S."/>
            <person name="Watanabe-Okochi N."/>
            <person name="Yoshimi A."/>
            <person name="Ichikawa M."/>
            <person name="Imai Y."/>
            <person name="Kurokawa M."/>
        </authorList>
    </citation>
    <scope>FUNCTION</scope>
</reference>
<reference key="20">
    <citation type="journal article" date="2010" name="Sci. Signal.">
        <title>Quantitative phosphoproteomics reveals widespread full phosphorylation site occupancy during mitosis.</title>
        <authorList>
            <person name="Olsen J.V."/>
            <person name="Vermeulen M."/>
            <person name="Santamaria A."/>
            <person name="Kumar C."/>
            <person name="Miller M.L."/>
            <person name="Jensen L.J."/>
            <person name="Gnad F."/>
            <person name="Cox J."/>
            <person name="Jensen T.S."/>
            <person name="Nigg E.A."/>
            <person name="Brunak S."/>
            <person name="Mann M."/>
        </authorList>
    </citation>
    <scope>PHOSPHORYLATION [LARGE SCALE ANALYSIS] AT SER-1039</scope>
    <scope>IDENTIFICATION BY MASS SPECTROMETRY [LARGE SCALE ANALYSIS]</scope>
    <source>
        <tissue>Cervix carcinoma</tissue>
    </source>
</reference>
<reference key="21">
    <citation type="journal article" date="2012" name="Cell">
        <title>Prdm3 and Prdm16 are H3K9me1 methyltransferases required for mammalian heterochromatin integrity.</title>
        <authorList>
            <person name="Pinheiro I."/>
            <person name="Margueron R."/>
            <person name="Shukeir N."/>
            <person name="Eisold M."/>
            <person name="Fritzsch C."/>
            <person name="Richter F.M."/>
            <person name="Mittler G."/>
            <person name="Genoud C."/>
            <person name="Goyama S."/>
            <person name="Kurokawa M."/>
            <person name="Son J."/>
            <person name="Reinberg D."/>
            <person name="Lachner M."/>
            <person name="Jenuwein T."/>
        </authorList>
    </citation>
    <scope>IDENTIFICATION BY MASS SPECTROMETRY</scope>
    <scope>SUBCELLULAR LOCATION</scope>
</reference>
<reference key="22">
    <citation type="journal article" date="2013" name="J. Proteome Res.">
        <title>Toward a comprehensive characterization of a human cancer cell phosphoproteome.</title>
        <authorList>
            <person name="Zhou H."/>
            <person name="Di Palma S."/>
            <person name="Preisinger C."/>
            <person name="Peng M."/>
            <person name="Polat A.N."/>
            <person name="Heck A.J."/>
            <person name="Mohammed S."/>
        </authorList>
    </citation>
    <scope>PHOSPHORYLATION [LARGE SCALE ANALYSIS] AT SER-624; SER-726; SER-1037 AND SER-1039</scope>
    <scope>IDENTIFICATION BY MASS SPECTROMETRY [LARGE SCALE ANALYSIS]</scope>
    <source>
        <tissue>Cervix carcinoma</tissue>
        <tissue>Erythroleukemia</tissue>
    </source>
</reference>
<reference key="23">
    <citation type="journal article" date="2014" name="Nat. Struct. Mol. Biol.">
        <title>Uncovering global SUMOylation signaling networks in a site-specific manner.</title>
        <authorList>
            <person name="Hendriks I.A."/>
            <person name="D'Souza R.C."/>
            <person name="Yang B."/>
            <person name="Verlaan-de Vries M."/>
            <person name="Mann M."/>
            <person name="Vertegaal A.C."/>
        </authorList>
    </citation>
    <scope>SUMOYLATION [LARGE SCALE ANALYSIS] AT LYS-190; LYS-555; LYS-685; LYS-721; LYS-735; LYS-752; LYS-787; LYS-1127; LYS-1132 AND LYS-1152</scope>
    <scope>IDENTIFICATION BY MASS SPECTROMETRY [LARGE SCALE ANALYSIS]</scope>
</reference>
<reference key="24">
    <citation type="journal article" date="2015" name="Am. J. Hum. Genet.">
        <title>Mutations in MECOM, encoding oncoprotein EVI1, cause radioulnar synostosis with amegakaryocytic thrombocytopenia.</title>
        <authorList>
            <person name="Niihori T."/>
            <person name="Ouchi-Uchiyama M."/>
            <person name="Sasahara Y."/>
            <person name="Kaneko T."/>
            <person name="Hashii Y."/>
            <person name="Irie M."/>
            <person name="Sato A."/>
            <person name="Saito-Nanjo Y."/>
            <person name="Funayama R."/>
            <person name="Nagashima T."/>
            <person name="Inoue S."/>
            <person name="Nakayama K."/>
            <person name="Ozono K."/>
            <person name="Kure S."/>
            <person name="Matsubara Y."/>
            <person name="Imaizumi M."/>
            <person name="Aoki Y."/>
        </authorList>
    </citation>
    <scope>INVOLVEMENT IN RUSAT2</scope>
    <scope>VARIANTS RUSAT2 TRP-929; ARG-930 AND ALA-935</scope>
    <scope>CHARACTERIZATION OF VARIANTS RUSAT2 TRP-929; ARG-930 AND ALA-935</scope>
</reference>
<reference key="25">
    <citation type="journal article" date="2015" name="Cell Rep.">
        <title>SUMO-2 orchestrates chromatin modifiers in response to DNA damage.</title>
        <authorList>
            <person name="Hendriks I.A."/>
            <person name="Treffers L.W."/>
            <person name="Verlaan-de Vries M."/>
            <person name="Olsen J.V."/>
            <person name="Vertegaal A.C."/>
        </authorList>
    </citation>
    <scope>SUMOYLATION [LARGE SCALE ANALYSIS] AT LYS-190; LYS-555; LYS-685; LYS-721; LYS-877; LYS-1053; LYS-1132 AND LYS-1152</scope>
    <scope>IDENTIFICATION BY MASS SPECTROMETRY [LARGE SCALE ANALYSIS]</scope>
</reference>
<reference key="26">
    <citation type="journal article" date="2017" name="Nat. Struct. Mol. Biol.">
        <title>Site-specific mapping of the human SUMO proteome reveals co-modification with phosphorylation.</title>
        <authorList>
            <person name="Hendriks I.A."/>
            <person name="Lyon D."/>
            <person name="Young C."/>
            <person name="Jensen L.J."/>
            <person name="Vertegaal A.C."/>
            <person name="Nielsen M.L."/>
        </authorList>
    </citation>
    <scope>SUMOYLATION [LARGE SCALE ANALYSIS] AT LYS-99; LYS-190; LYS-249; LYS-292; LYS-367; LYS-374; LYS-430; LYS-523; LYS-543; LYS-547; LYS-555; LYS-622; LYS-635; LYS-663; LYS-685; LYS-721; LYS-731; LYS-732; LYS-735; LYS-749; LYS-752; LYS-760; LYS-787; LYS-800; LYS-801; LYS-835; LYS-844; LYS-846; LYS-877; LYS-1018; LYS-1053; LYS-1056; LYS-1120; LYS-1127; LYS-1132; LYS-1149; LYS-1152; LYS-1176 AND LYS-1184</scope>
    <scope>SUMOYLATION [LARGE SCALE ANALYSIS] AT LYS-658 (ISOFORM 1)</scope>
    <scope>SUMOYLATION [LARGE SCALE ANALYSIS] AT LYS-846 (ISOFORMS 2 AND 8)</scope>
    <scope>SUMOYLATION [LARGE SCALE ANALYSIS] AT LYS-202 AND LYS-723 (ISOFORM 4)</scope>
    <scope>SUMOYLATION [LARGE SCALE ANALYSIS] AT LYS-138 (ISOFORM 6)</scope>
    <scope>IDENTIFICATION BY MASS SPECTROMETRY [LARGE SCALE ANALYSIS]</scope>
</reference>
<gene>
    <name evidence="20" type="primary">MECOM</name>
    <name evidence="18" type="synonym">EVI1</name>
    <name evidence="18" type="synonym">MDS1</name>
    <name evidence="17" type="synonym">PRDM3</name>
</gene>
<protein>
    <recommendedName>
        <fullName evidence="19">Histone-lysine N-methyltransferase MECOM</fullName>
        <ecNumber evidence="2">2.1.1.367</ecNumber>
    </recommendedName>
    <alternativeName>
        <fullName>Ecotropic virus integration site 1 protein homolog</fullName>
        <shortName>EVI-1</shortName>
    </alternativeName>
    <alternativeName>
        <fullName evidence="19">MDS1 and EVI1 complex locus protein</fullName>
    </alternativeName>
    <alternativeName>
        <fullName>Myelodysplasia syndrome 1 protein</fullName>
    </alternativeName>
    <alternativeName>
        <fullName>Myelodysplasia syndrome-associated protein 1</fullName>
    </alternativeName>
</protein>
<organism>
    <name type="scientific">Homo sapiens</name>
    <name type="common">Human</name>
    <dbReference type="NCBI Taxonomy" id="9606"/>
    <lineage>
        <taxon>Eukaryota</taxon>
        <taxon>Metazoa</taxon>
        <taxon>Chordata</taxon>
        <taxon>Craniata</taxon>
        <taxon>Vertebrata</taxon>
        <taxon>Euteleostomi</taxon>
        <taxon>Mammalia</taxon>
        <taxon>Eutheria</taxon>
        <taxon>Euarchontoglires</taxon>
        <taxon>Primates</taxon>
        <taxon>Haplorrhini</taxon>
        <taxon>Catarrhini</taxon>
        <taxon>Hominidae</taxon>
        <taxon>Homo</taxon>
    </lineage>
</organism>
<accession>Q03112</accession>
<accession>A1L4F3</accession>
<accession>A8KA00</accession>
<accession>B7Z8W7</accession>
<accession>B7ZLQ3</accession>
<accession>B7ZLQ4</accession>
<accession>C9JAK0</accession>
<accession>D3DNP7</accession>
<accession>E7EQ57</accession>
<accession>Q13465</accession>
<accession>Q13466</accession>
<accession>Q16122</accession>
<accession>Q5HYI1</accession>
<accession>Q6FH90</accession>
<accession>Q6MZS6</accession>
<accession>Q8NEI5</accession>
<accession>Q99917</accession>